<keyword id="KW-0150">Chloroplast</keyword>
<keyword id="KW-0507">mRNA processing</keyword>
<keyword id="KW-0934">Plastid</keyword>
<keyword id="KW-0694">RNA-binding</keyword>
<keyword id="KW-0819">tRNA processing</keyword>
<feature type="chain" id="PRO_0000355963" description="Maturase K">
    <location>
        <begin position="1"/>
        <end position="565"/>
    </location>
</feature>
<protein>
    <recommendedName>
        <fullName evidence="1">Maturase K</fullName>
    </recommendedName>
    <alternativeName>
        <fullName evidence="1">Intron maturase</fullName>
    </alternativeName>
</protein>
<name>MATK_STAPU</name>
<organism>
    <name type="scientific">Staurastrum punctulatum</name>
    <name type="common">Green alga</name>
    <name type="synonym">Cosmoastrum punctulatum</name>
    <dbReference type="NCBI Taxonomy" id="102822"/>
    <lineage>
        <taxon>Eukaryota</taxon>
        <taxon>Viridiplantae</taxon>
        <taxon>Streptophyta</taxon>
        <taxon>Zygnematophyceae</taxon>
        <taxon>Zygnematophycidae</taxon>
        <taxon>Desmidiales</taxon>
        <taxon>Desmidiaceae</taxon>
        <taxon>Staurastrum</taxon>
    </lineage>
</organism>
<accession>Q32RZ3</accession>
<evidence type="ECO:0000255" key="1">
    <source>
        <dbReference type="HAMAP-Rule" id="MF_01390"/>
    </source>
</evidence>
<comment type="function">
    <text evidence="1">Usually encoded in the trnK tRNA gene intron. Probably assists in splicing its own and other chloroplast group II introns.</text>
</comment>
<comment type="subcellular location">
    <subcellularLocation>
        <location>Plastid</location>
        <location>Chloroplast</location>
    </subcellularLocation>
</comment>
<comment type="similarity">
    <text evidence="1">Belongs to the intron maturase 2 family. MatK subfamily.</text>
</comment>
<dbReference type="EMBL" id="AY958085">
    <property type="protein sequence ID" value="AAX45768.1"/>
    <property type="molecule type" value="Genomic_DNA"/>
</dbReference>
<dbReference type="GO" id="GO:0009507">
    <property type="term" value="C:chloroplast"/>
    <property type="evidence" value="ECO:0007669"/>
    <property type="project" value="UniProtKB-SubCell"/>
</dbReference>
<dbReference type="GO" id="GO:0003723">
    <property type="term" value="F:RNA binding"/>
    <property type="evidence" value="ECO:0007669"/>
    <property type="project" value="UniProtKB-KW"/>
</dbReference>
<dbReference type="GO" id="GO:0006397">
    <property type="term" value="P:mRNA processing"/>
    <property type="evidence" value="ECO:0007669"/>
    <property type="project" value="UniProtKB-KW"/>
</dbReference>
<dbReference type="GO" id="GO:0008380">
    <property type="term" value="P:RNA splicing"/>
    <property type="evidence" value="ECO:0007669"/>
    <property type="project" value="UniProtKB-UniRule"/>
</dbReference>
<dbReference type="GO" id="GO:0008033">
    <property type="term" value="P:tRNA processing"/>
    <property type="evidence" value="ECO:0007669"/>
    <property type="project" value="UniProtKB-KW"/>
</dbReference>
<dbReference type="HAMAP" id="MF_01390">
    <property type="entry name" value="MatK"/>
    <property type="match status" value="1"/>
</dbReference>
<dbReference type="InterPro" id="IPR024937">
    <property type="entry name" value="Domain_X"/>
</dbReference>
<dbReference type="InterPro" id="IPR002866">
    <property type="entry name" value="Maturase_MatK"/>
</dbReference>
<dbReference type="PANTHER" id="PTHR34811">
    <property type="entry name" value="MATURASE K"/>
    <property type="match status" value="1"/>
</dbReference>
<dbReference type="PANTHER" id="PTHR34811:SF1">
    <property type="entry name" value="MATURASE K"/>
    <property type="match status" value="1"/>
</dbReference>
<dbReference type="Pfam" id="PF01348">
    <property type="entry name" value="Intron_maturas2"/>
    <property type="match status" value="1"/>
</dbReference>
<geneLocation type="chloroplast"/>
<reference key="1">
    <citation type="journal article" date="2005" name="BMC Biol.">
        <title>The complete chloroplast DNA sequences of the charophycean green algae Staurastrum and Zygnema reveal that the chloroplast genome underwent extensive changes during the evolution of the Zygnematales.</title>
        <authorList>
            <person name="Turmel M."/>
            <person name="Otis C."/>
            <person name="Lemieux C."/>
        </authorList>
    </citation>
    <scope>NUCLEOTIDE SEQUENCE [LARGE SCALE GENOMIC DNA]</scope>
</reference>
<proteinExistence type="inferred from homology"/>
<gene>
    <name evidence="1" type="primary">matK</name>
</gene>
<sequence>MKDSREKLIKRFLCAKTNTKIVNQENKLYYFFLHEDLYPIIFQNTDSSFGKFSSVFRKTNIKKNHRESFLTIKSCIFLFRSNNFSGRKRSFFSNTRFHDQKKKENFLPLPKKVIFSLFFESITFILLCNQKKSDFEKQFFQTKDLSISIQKPLASLERQWQYDSFGFQGCFSYFFHPEVVLRILRKKFQDISFLHLLRKFLHLNVYLSNNTVKEVPTNNIRTILWNIYFLEIDSFFVSICKNYCISDEINNVSSNYSLSCFEKIQEWTYFVEKQEYKDFFEKKLYPYEIFDTITIRNSEERRLEQSIKRQISFLDQSKIYKYFRTNTNWFIFFQKQKPENILLKRWIILFFIRRLGYILQENTINWTLTFSEYQNELSAYFFLAYILQFPKKKNFVKINTKLFFLVHYFVRRVISFLNPLYLIILLLSKQNFCNSFGYPKSKSGWVTWTDTDIIQNFTRLQNNLFFFYSGCTNTKALARIHYILHFSCVKTLACKHKTNLRYIYKKFGTNLTRKDFTTKIFVTNQSKNFRLRSLWKNQKMTRVWNFRLTQLNSLIFHLETFYRLR</sequence>